<sequence length="298" mass="34512">MLSFSDILLKLQEFWKNQGCLIVQPYDIPAGAGTFHPATLLRSLDSKPWNVAYVAPSRRPTDGRYGENPNRLGSYYQFQVLIKPSPDNIQELYLRSLEALGLDLKSHDVRFVEDNWESPTLGAWGLGWEVWLDGMEVTQFTYFQQVGGIPCRPVAVEITYGVERLAMYIQSVENIFDILWNDSSNSAPMLYADVHLQSEYEFSKYHFELADTQMIFSLFNQYTQEVKHCLQQKVPLVAYDYTMLASHFFNILDARKAISVAQRQNYILQIRELAKGCATLYKEMEEERTMRREKNKGL</sequence>
<organism>
    <name type="scientific">Helicobacter hepaticus (strain ATCC 51449 / 3B1)</name>
    <dbReference type="NCBI Taxonomy" id="235279"/>
    <lineage>
        <taxon>Bacteria</taxon>
        <taxon>Pseudomonadati</taxon>
        <taxon>Campylobacterota</taxon>
        <taxon>Epsilonproteobacteria</taxon>
        <taxon>Campylobacterales</taxon>
        <taxon>Helicobacteraceae</taxon>
        <taxon>Helicobacter</taxon>
    </lineage>
</organism>
<protein>
    <recommendedName>
        <fullName evidence="1">Glycine--tRNA ligase alpha subunit</fullName>
        <ecNumber evidence="1">6.1.1.14</ecNumber>
    </recommendedName>
    <alternativeName>
        <fullName evidence="1">Glycyl-tRNA synthetase alpha subunit</fullName>
        <shortName evidence="1">GlyRS</shortName>
    </alternativeName>
</protein>
<accession>Q7VIS3</accession>
<dbReference type="EC" id="6.1.1.14" evidence="1"/>
<dbReference type="EMBL" id="AE017125">
    <property type="protein sequence ID" value="AAP77128.1"/>
    <property type="molecule type" value="Genomic_DNA"/>
</dbReference>
<dbReference type="RefSeq" id="WP_011115373.1">
    <property type="nucleotide sequence ID" value="NC_004917.1"/>
</dbReference>
<dbReference type="SMR" id="Q7VIS3"/>
<dbReference type="STRING" id="235279.HH_0531"/>
<dbReference type="KEGG" id="hhe:HH_0531"/>
<dbReference type="eggNOG" id="COG0752">
    <property type="taxonomic scope" value="Bacteria"/>
</dbReference>
<dbReference type="HOGENOM" id="CLU_057066_1_0_7"/>
<dbReference type="OrthoDB" id="9802183at2"/>
<dbReference type="Proteomes" id="UP000002495">
    <property type="component" value="Chromosome"/>
</dbReference>
<dbReference type="GO" id="GO:0005829">
    <property type="term" value="C:cytosol"/>
    <property type="evidence" value="ECO:0007669"/>
    <property type="project" value="TreeGrafter"/>
</dbReference>
<dbReference type="GO" id="GO:0005524">
    <property type="term" value="F:ATP binding"/>
    <property type="evidence" value="ECO:0007669"/>
    <property type="project" value="UniProtKB-UniRule"/>
</dbReference>
<dbReference type="GO" id="GO:0004820">
    <property type="term" value="F:glycine-tRNA ligase activity"/>
    <property type="evidence" value="ECO:0007669"/>
    <property type="project" value="UniProtKB-UniRule"/>
</dbReference>
<dbReference type="GO" id="GO:0006426">
    <property type="term" value="P:glycyl-tRNA aminoacylation"/>
    <property type="evidence" value="ECO:0007669"/>
    <property type="project" value="UniProtKB-UniRule"/>
</dbReference>
<dbReference type="CDD" id="cd00733">
    <property type="entry name" value="GlyRS_alpha_core"/>
    <property type="match status" value="1"/>
</dbReference>
<dbReference type="FunFam" id="3.30.930.10:FF:000006">
    <property type="entry name" value="Glycine--tRNA ligase alpha subunit"/>
    <property type="match status" value="1"/>
</dbReference>
<dbReference type="Gene3D" id="3.30.930.10">
    <property type="entry name" value="Bira Bifunctional Protein, Domain 2"/>
    <property type="match status" value="1"/>
</dbReference>
<dbReference type="Gene3D" id="1.20.58.180">
    <property type="entry name" value="Class II aaRS and biotin synthetases, domain 2"/>
    <property type="match status" value="1"/>
</dbReference>
<dbReference type="HAMAP" id="MF_00254">
    <property type="entry name" value="Gly_tRNA_synth_alpha"/>
    <property type="match status" value="1"/>
</dbReference>
<dbReference type="InterPro" id="IPR045864">
    <property type="entry name" value="aa-tRNA-synth_II/BPL/LPL"/>
</dbReference>
<dbReference type="InterPro" id="IPR006194">
    <property type="entry name" value="Gly-tRNA-synth_heterodimer"/>
</dbReference>
<dbReference type="InterPro" id="IPR002310">
    <property type="entry name" value="Gly-tRNA_ligase_asu"/>
</dbReference>
<dbReference type="NCBIfam" id="TIGR00388">
    <property type="entry name" value="glyQ"/>
    <property type="match status" value="1"/>
</dbReference>
<dbReference type="NCBIfam" id="NF006827">
    <property type="entry name" value="PRK09348.1"/>
    <property type="match status" value="1"/>
</dbReference>
<dbReference type="PANTHER" id="PTHR30075:SF2">
    <property type="entry name" value="GLYCINE--TRNA LIGASE, CHLOROPLASTIC_MITOCHONDRIAL 2"/>
    <property type="match status" value="1"/>
</dbReference>
<dbReference type="PANTHER" id="PTHR30075">
    <property type="entry name" value="GLYCYL-TRNA SYNTHETASE"/>
    <property type="match status" value="1"/>
</dbReference>
<dbReference type="Pfam" id="PF02091">
    <property type="entry name" value="tRNA-synt_2e"/>
    <property type="match status" value="1"/>
</dbReference>
<dbReference type="PRINTS" id="PR01044">
    <property type="entry name" value="TRNASYNTHGA"/>
</dbReference>
<dbReference type="SUPFAM" id="SSF55681">
    <property type="entry name" value="Class II aaRS and biotin synthetases"/>
    <property type="match status" value="1"/>
</dbReference>
<dbReference type="PROSITE" id="PS50861">
    <property type="entry name" value="AA_TRNA_LIGASE_II_GLYAB"/>
    <property type="match status" value="1"/>
</dbReference>
<comment type="catalytic activity">
    <reaction evidence="1">
        <text>tRNA(Gly) + glycine + ATP = glycyl-tRNA(Gly) + AMP + diphosphate</text>
        <dbReference type="Rhea" id="RHEA:16013"/>
        <dbReference type="Rhea" id="RHEA-COMP:9664"/>
        <dbReference type="Rhea" id="RHEA-COMP:9683"/>
        <dbReference type="ChEBI" id="CHEBI:30616"/>
        <dbReference type="ChEBI" id="CHEBI:33019"/>
        <dbReference type="ChEBI" id="CHEBI:57305"/>
        <dbReference type="ChEBI" id="CHEBI:78442"/>
        <dbReference type="ChEBI" id="CHEBI:78522"/>
        <dbReference type="ChEBI" id="CHEBI:456215"/>
        <dbReference type="EC" id="6.1.1.14"/>
    </reaction>
</comment>
<comment type="subunit">
    <text evidence="1">Tetramer of two alpha and two beta subunits.</text>
</comment>
<comment type="subcellular location">
    <subcellularLocation>
        <location evidence="1">Cytoplasm</location>
    </subcellularLocation>
</comment>
<comment type="similarity">
    <text evidence="1">Belongs to the class-II aminoacyl-tRNA synthetase family.</text>
</comment>
<proteinExistence type="inferred from homology"/>
<reference key="1">
    <citation type="journal article" date="2003" name="Proc. Natl. Acad. Sci. U.S.A.">
        <title>The complete genome sequence of the carcinogenic bacterium Helicobacter hepaticus.</title>
        <authorList>
            <person name="Suerbaum S."/>
            <person name="Josenhans C."/>
            <person name="Sterzenbach T."/>
            <person name="Drescher B."/>
            <person name="Brandt P."/>
            <person name="Bell M."/>
            <person name="Droege M."/>
            <person name="Fartmann B."/>
            <person name="Fischer H.-P."/>
            <person name="Ge Z."/>
            <person name="Hoerster A."/>
            <person name="Holland R."/>
            <person name="Klein K."/>
            <person name="Koenig J."/>
            <person name="Macko L."/>
            <person name="Mendz G.L."/>
            <person name="Nyakatura G."/>
            <person name="Schauer D.B."/>
            <person name="Shen Z."/>
            <person name="Weber J."/>
            <person name="Frosch M."/>
            <person name="Fox J.G."/>
        </authorList>
    </citation>
    <scope>NUCLEOTIDE SEQUENCE [LARGE SCALE GENOMIC DNA]</scope>
    <source>
        <strain>ATCC 51449 / 3B1</strain>
    </source>
</reference>
<keyword id="KW-0030">Aminoacyl-tRNA synthetase</keyword>
<keyword id="KW-0067">ATP-binding</keyword>
<keyword id="KW-0963">Cytoplasm</keyword>
<keyword id="KW-0436">Ligase</keyword>
<keyword id="KW-0547">Nucleotide-binding</keyword>
<keyword id="KW-0648">Protein biosynthesis</keyword>
<keyword id="KW-1185">Reference proteome</keyword>
<feature type="chain" id="PRO_1000047431" description="Glycine--tRNA ligase alpha subunit">
    <location>
        <begin position="1"/>
        <end position="298"/>
    </location>
</feature>
<gene>
    <name evidence="1" type="primary">glyQ</name>
    <name type="ordered locus">HH_0531</name>
</gene>
<name>SYGA_HELHP</name>
<evidence type="ECO:0000255" key="1">
    <source>
        <dbReference type="HAMAP-Rule" id="MF_00254"/>
    </source>
</evidence>